<name>MED8_ASPFU</name>
<feature type="chain" id="PRO_0000304535" description="Mediator of RNA polymerase II transcription subunit 8">
    <location>
        <begin position="1"/>
        <end position="249"/>
    </location>
</feature>
<feature type="region of interest" description="Disordered" evidence="3">
    <location>
        <begin position="170"/>
        <end position="249"/>
    </location>
</feature>
<feature type="coiled-coil region" evidence="2">
    <location>
        <begin position="154"/>
        <end position="200"/>
    </location>
</feature>
<feature type="compositionally biased region" description="Acidic residues" evidence="3">
    <location>
        <begin position="173"/>
        <end position="192"/>
    </location>
</feature>
<feature type="compositionally biased region" description="Low complexity" evidence="3">
    <location>
        <begin position="211"/>
        <end position="232"/>
    </location>
</feature>
<keyword id="KW-0010">Activator</keyword>
<keyword id="KW-0175">Coiled coil</keyword>
<keyword id="KW-0539">Nucleus</keyword>
<keyword id="KW-1185">Reference proteome</keyword>
<keyword id="KW-0804">Transcription</keyword>
<keyword id="KW-0805">Transcription regulation</keyword>
<comment type="function">
    <text evidence="1">Component of the Mediator complex, a coactivator involved in the regulated transcription of nearly all RNA polymerase II-dependent genes. Mediator functions as a bridge to convey information from gene-specific regulatory proteins to the basal RNA polymerase II transcription machinery. Mediator is recruited to promoters by direct interactions with regulatory proteins and serves as a scaffold for the assembly of a functional preinitiation complex with RNA polymerase II and the general transcription factors (By similarity).</text>
</comment>
<comment type="subunit">
    <text evidence="1">Component of the Mediator complex.</text>
</comment>
<comment type="subcellular location">
    <subcellularLocation>
        <location evidence="4">Nucleus</location>
    </subcellularLocation>
</comment>
<comment type="similarity">
    <text evidence="4">Belongs to the Mediator complex subunit 8 family.</text>
</comment>
<reference key="1">
    <citation type="journal article" date="2005" name="Nature">
        <title>Genomic sequence of the pathogenic and allergenic filamentous fungus Aspergillus fumigatus.</title>
        <authorList>
            <person name="Nierman W.C."/>
            <person name="Pain A."/>
            <person name="Anderson M.J."/>
            <person name="Wortman J.R."/>
            <person name="Kim H.S."/>
            <person name="Arroyo J."/>
            <person name="Berriman M."/>
            <person name="Abe K."/>
            <person name="Archer D.B."/>
            <person name="Bermejo C."/>
            <person name="Bennett J.W."/>
            <person name="Bowyer P."/>
            <person name="Chen D."/>
            <person name="Collins M."/>
            <person name="Coulsen R."/>
            <person name="Davies R."/>
            <person name="Dyer P.S."/>
            <person name="Farman M.L."/>
            <person name="Fedorova N."/>
            <person name="Fedorova N.D."/>
            <person name="Feldblyum T.V."/>
            <person name="Fischer R."/>
            <person name="Fosker N."/>
            <person name="Fraser A."/>
            <person name="Garcia J.L."/>
            <person name="Garcia M.J."/>
            <person name="Goble A."/>
            <person name="Goldman G.H."/>
            <person name="Gomi K."/>
            <person name="Griffith-Jones S."/>
            <person name="Gwilliam R."/>
            <person name="Haas B.J."/>
            <person name="Haas H."/>
            <person name="Harris D.E."/>
            <person name="Horiuchi H."/>
            <person name="Huang J."/>
            <person name="Humphray S."/>
            <person name="Jimenez J."/>
            <person name="Keller N."/>
            <person name="Khouri H."/>
            <person name="Kitamoto K."/>
            <person name="Kobayashi T."/>
            <person name="Konzack S."/>
            <person name="Kulkarni R."/>
            <person name="Kumagai T."/>
            <person name="Lafton A."/>
            <person name="Latge J.-P."/>
            <person name="Li W."/>
            <person name="Lord A."/>
            <person name="Lu C."/>
            <person name="Majoros W.H."/>
            <person name="May G.S."/>
            <person name="Miller B.L."/>
            <person name="Mohamoud Y."/>
            <person name="Molina M."/>
            <person name="Monod M."/>
            <person name="Mouyna I."/>
            <person name="Mulligan S."/>
            <person name="Murphy L.D."/>
            <person name="O'Neil S."/>
            <person name="Paulsen I."/>
            <person name="Penalva M.A."/>
            <person name="Pertea M."/>
            <person name="Price C."/>
            <person name="Pritchard B.L."/>
            <person name="Quail M.A."/>
            <person name="Rabbinowitsch E."/>
            <person name="Rawlins N."/>
            <person name="Rajandream M.A."/>
            <person name="Reichard U."/>
            <person name="Renauld H."/>
            <person name="Robson G.D."/>
            <person name="Rodriguez de Cordoba S."/>
            <person name="Rodriguez-Pena J.M."/>
            <person name="Ronning C.M."/>
            <person name="Rutter S."/>
            <person name="Salzberg S.L."/>
            <person name="Sanchez M."/>
            <person name="Sanchez-Ferrero J.C."/>
            <person name="Saunders D."/>
            <person name="Seeger K."/>
            <person name="Squares R."/>
            <person name="Squares S."/>
            <person name="Takeuchi M."/>
            <person name="Tekaia F."/>
            <person name="Turner G."/>
            <person name="Vazquez de Aldana C.R."/>
            <person name="Weidman J."/>
            <person name="White O."/>
            <person name="Woodward J.R."/>
            <person name="Yu J.-H."/>
            <person name="Fraser C.M."/>
            <person name="Galagan J.E."/>
            <person name="Asai K."/>
            <person name="Machida M."/>
            <person name="Hall N."/>
            <person name="Barrell B.G."/>
            <person name="Denning D.W."/>
        </authorList>
    </citation>
    <scope>NUCLEOTIDE SEQUENCE [LARGE SCALE GENOMIC DNA]</scope>
    <source>
        <strain>ATCC MYA-4609 / CBS 101355 / FGSC A1100 / Af293</strain>
    </source>
</reference>
<dbReference type="EMBL" id="AAHF01000005">
    <property type="protein sequence ID" value="EAL89951.1"/>
    <property type="molecule type" value="Genomic_DNA"/>
</dbReference>
<dbReference type="RefSeq" id="XP_751989.1">
    <property type="nucleotide sequence ID" value="XM_746896.1"/>
</dbReference>
<dbReference type="SMR" id="Q4WP83"/>
<dbReference type="FunCoup" id="Q4WP83">
    <property type="interactions" value="124"/>
</dbReference>
<dbReference type="STRING" id="330879.Q4WP83"/>
<dbReference type="EnsemblFungi" id="EAL89951">
    <property type="protein sequence ID" value="EAL89951"/>
    <property type="gene ID" value="AFUA_4G08360"/>
</dbReference>
<dbReference type="GeneID" id="3509177"/>
<dbReference type="KEGG" id="afm:AFUA_4G08360"/>
<dbReference type="VEuPathDB" id="FungiDB:Afu4g08360"/>
<dbReference type="eggNOG" id="ENOG502S8U1">
    <property type="taxonomic scope" value="Eukaryota"/>
</dbReference>
<dbReference type="HOGENOM" id="CLU_074399_1_0_1"/>
<dbReference type="InParanoid" id="Q4WP83"/>
<dbReference type="OMA" id="WAPIEAN"/>
<dbReference type="OrthoDB" id="5329317at2759"/>
<dbReference type="Proteomes" id="UP000002530">
    <property type="component" value="Chromosome 4"/>
</dbReference>
<dbReference type="GO" id="GO:0070847">
    <property type="term" value="C:core mediator complex"/>
    <property type="evidence" value="ECO:0000318"/>
    <property type="project" value="GO_Central"/>
</dbReference>
<dbReference type="GO" id="GO:0016592">
    <property type="term" value="C:mediator complex"/>
    <property type="evidence" value="ECO:0000318"/>
    <property type="project" value="GO_Central"/>
</dbReference>
<dbReference type="GO" id="GO:0000978">
    <property type="term" value="F:RNA polymerase II cis-regulatory region sequence-specific DNA binding"/>
    <property type="evidence" value="ECO:0000318"/>
    <property type="project" value="GO_Central"/>
</dbReference>
<dbReference type="GO" id="GO:0003712">
    <property type="term" value="F:transcription coregulator activity"/>
    <property type="evidence" value="ECO:0000318"/>
    <property type="project" value="GO_Central"/>
</dbReference>
<dbReference type="GO" id="GO:0006357">
    <property type="term" value="P:regulation of transcription by RNA polymerase II"/>
    <property type="evidence" value="ECO:0000318"/>
    <property type="project" value="GO_Central"/>
</dbReference>
<dbReference type="FunFam" id="1.20.58.1710:FF:000002">
    <property type="entry name" value="Mediator of RNA polymerase II transcription subunit 8"/>
    <property type="match status" value="1"/>
</dbReference>
<dbReference type="Gene3D" id="1.20.58.1710">
    <property type="match status" value="1"/>
</dbReference>
<dbReference type="Gene3D" id="6.10.250.2610">
    <property type="match status" value="1"/>
</dbReference>
<dbReference type="InterPro" id="IPR019364">
    <property type="entry name" value="Mediatior_Med8_fun/met"/>
</dbReference>
<dbReference type="PANTHER" id="PTHR13074">
    <property type="entry name" value="MEDIATOR OF RNA POLYMERASE II TRANSCRIPTION SUBUNIT 8"/>
    <property type="match status" value="1"/>
</dbReference>
<dbReference type="PANTHER" id="PTHR13074:SF9">
    <property type="entry name" value="MEDIATOR OF RNA POLYMERASE II TRANSCRIPTION SUBUNIT 8"/>
    <property type="match status" value="1"/>
</dbReference>
<dbReference type="Pfam" id="PF10232">
    <property type="entry name" value="Med8"/>
    <property type="match status" value="1"/>
</dbReference>
<protein>
    <recommendedName>
        <fullName>Mediator of RNA polymerase II transcription subunit 8</fullName>
    </recommendedName>
    <alternativeName>
        <fullName>Mediator complex subunit 8</fullName>
    </alternativeName>
</protein>
<proteinExistence type="inferred from homology"/>
<organism>
    <name type="scientific">Aspergillus fumigatus (strain ATCC MYA-4609 / CBS 101355 / FGSC A1100 / Af293)</name>
    <name type="common">Neosartorya fumigata</name>
    <dbReference type="NCBI Taxonomy" id="330879"/>
    <lineage>
        <taxon>Eukaryota</taxon>
        <taxon>Fungi</taxon>
        <taxon>Dikarya</taxon>
        <taxon>Ascomycota</taxon>
        <taxon>Pezizomycotina</taxon>
        <taxon>Eurotiomycetes</taxon>
        <taxon>Eurotiomycetidae</taxon>
        <taxon>Eurotiales</taxon>
        <taxon>Aspergillaceae</taxon>
        <taxon>Aspergillus</taxon>
        <taxon>Aspergillus subgen. Fumigati</taxon>
    </lineage>
</organism>
<gene>
    <name type="primary">med8</name>
    <name type="ORF">AFUA_4G08360</name>
</gene>
<evidence type="ECO:0000250" key="1"/>
<evidence type="ECO:0000255" key="2"/>
<evidence type="ECO:0000256" key="3">
    <source>
        <dbReference type="SAM" id="MobiDB-lite"/>
    </source>
</evidence>
<evidence type="ECO:0000305" key="4"/>
<sequence>MASLNQDQIKILEQSRQRLVQLTRSLASLIGSLNQSDPLPSWSSLQSQAGIISNNLVSISEHLADNKDLLSALVAYPGPSYPGRTQAPTLEQLLRTKLDPRVEDWVSRGRRAGASALEDRGALSESALAELWDWAPVEANQEARRRNWGGNFTLEEREMGIQNVVTGLRRQLEDEDEEASESEEEVEEEEMEVVGVRRRSGAGAGLEFDIAAPAPGSRQQQQQQKAAGPAVPLEDILRYMTTGIPPTQR</sequence>
<accession>Q4WP83</accession>